<dbReference type="EC" id="6.3.2.1" evidence="1"/>
<dbReference type="EMBL" id="BX842655">
    <property type="protein sequence ID" value="CAE78350.1"/>
    <property type="molecule type" value="Genomic_DNA"/>
</dbReference>
<dbReference type="RefSeq" id="WP_011165888.1">
    <property type="nucleotide sequence ID" value="NC_005363.1"/>
</dbReference>
<dbReference type="SMR" id="Q6MHI2"/>
<dbReference type="STRING" id="264462.Bd3561"/>
<dbReference type="GeneID" id="93014362"/>
<dbReference type="KEGG" id="bba:Bd3561"/>
<dbReference type="eggNOG" id="COG0414">
    <property type="taxonomic scope" value="Bacteria"/>
</dbReference>
<dbReference type="HOGENOM" id="CLU_047148_0_0_7"/>
<dbReference type="UniPathway" id="UPA00028">
    <property type="reaction ID" value="UER00005"/>
</dbReference>
<dbReference type="Proteomes" id="UP000008080">
    <property type="component" value="Chromosome"/>
</dbReference>
<dbReference type="GO" id="GO:0005829">
    <property type="term" value="C:cytosol"/>
    <property type="evidence" value="ECO:0007669"/>
    <property type="project" value="TreeGrafter"/>
</dbReference>
<dbReference type="GO" id="GO:0005524">
    <property type="term" value="F:ATP binding"/>
    <property type="evidence" value="ECO:0007669"/>
    <property type="project" value="UniProtKB-KW"/>
</dbReference>
<dbReference type="GO" id="GO:0004592">
    <property type="term" value="F:pantoate-beta-alanine ligase activity"/>
    <property type="evidence" value="ECO:0007669"/>
    <property type="project" value="UniProtKB-UniRule"/>
</dbReference>
<dbReference type="GO" id="GO:0015940">
    <property type="term" value="P:pantothenate biosynthetic process"/>
    <property type="evidence" value="ECO:0007669"/>
    <property type="project" value="UniProtKB-UniRule"/>
</dbReference>
<dbReference type="CDD" id="cd00560">
    <property type="entry name" value="PanC"/>
    <property type="match status" value="1"/>
</dbReference>
<dbReference type="Gene3D" id="3.40.50.620">
    <property type="entry name" value="HUPs"/>
    <property type="match status" value="1"/>
</dbReference>
<dbReference type="Gene3D" id="3.30.1300.10">
    <property type="entry name" value="Pantoate-beta-alanine ligase, C-terminal domain"/>
    <property type="match status" value="1"/>
</dbReference>
<dbReference type="HAMAP" id="MF_00158">
    <property type="entry name" value="PanC"/>
    <property type="match status" value="1"/>
</dbReference>
<dbReference type="InterPro" id="IPR004821">
    <property type="entry name" value="Cyt_trans-like"/>
</dbReference>
<dbReference type="InterPro" id="IPR003721">
    <property type="entry name" value="Pantoate_ligase"/>
</dbReference>
<dbReference type="InterPro" id="IPR042176">
    <property type="entry name" value="Pantoate_ligase_C"/>
</dbReference>
<dbReference type="InterPro" id="IPR014729">
    <property type="entry name" value="Rossmann-like_a/b/a_fold"/>
</dbReference>
<dbReference type="NCBIfam" id="TIGR00125">
    <property type="entry name" value="cyt_tran_rel"/>
    <property type="match status" value="1"/>
</dbReference>
<dbReference type="NCBIfam" id="TIGR00018">
    <property type="entry name" value="panC"/>
    <property type="match status" value="1"/>
</dbReference>
<dbReference type="PANTHER" id="PTHR21299">
    <property type="entry name" value="CYTIDYLATE KINASE/PANTOATE-BETA-ALANINE LIGASE"/>
    <property type="match status" value="1"/>
</dbReference>
<dbReference type="PANTHER" id="PTHR21299:SF1">
    <property type="entry name" value="PANTOATE--BETA-ALANINE LIGASE"/>
    <property type="match status" value="1"/>
</dbReference>
<dbReference type="Pfam" id="PF02569">
    <property type="entry name" value="Pantoate_ligase"/>
    <property type="match status" value="1"/>
</dbReference>
<dbReference type="SUPFAM" id="SSF52374">
    <property type="entry name" value="Nucleotidylyl transferase"/>
    <property type="match status" value="1"/>
</dbReference>
<gene>
    <name evidence="1" type="primary">panC</name>
    <name type="ordered locus">Bd3561</name>
</gene>
<reference key="1">
    <citation type="journal article" date="2004" name="Science">
        <title>A predator unmasked: life cycle of Bdellovibrio bacteriovorus from a genomic perspective.</title>
        <authorList>
            <person name="Rendulic S."/>
            <person name="Jagtap P."/>
            <person name="Rosinus A."/>
            <person name="Eppinger M."/>
            <person name="Baar C."/>
            <person name="Lanz C."/>
            <person name="Keller H."/>
            <person name="Lambert C."/>
            <person name="Evans K.J."/>
            <person name="Goesmann A."/>
            <person name="Meyer F."/>
            <person name="Sockett R.E."/>
            <person name="Schuster S.C."/>
        </authorList>
    </citation>
    <scope>NUCLEOTIDE SEQUENCE [LARGE SCALE GENOMIC DNA]</scope>
    <source>
        <strain>ATCC 15356 / DSM 50701 / NCIMB 9529 / HD100</strain>
    </source>
</reference>
<keyword id="KW-0067">ATP-binding</keyword>
<keyword id="KW-0963">Cytoplasm</keyword>
<keyword id="KW-0436">Ligase</keyword>
<keyword id="KW-0547">Nucleotide-binding</keyword>
<keyword id="KW-0566">Pantothenate biosynthesis</keyword>
<keyword id="KW-1185">Reference proteome</keyword>
<feature type="chain" id="PRO_0000305404" description="Pantothenate synthetase">
    <location>
        <begin position="1"/>
        <end position="251"/>
    </location>
</feature>
<feature type="active site" description="Proton donor" evidence="1">
    <location>
        <position position="35"/>
    </location>
</feature>
<feature type="binding site" evidence="1">
    <location>
        <begin position="28"/>
        <end position="35"/>
    </location>
    <ligand>
        <name>ATP</name>
        <dbReference type="ChEBI" id="CHEBI:30616"/>
    </ligand>
</feature>
<feature type="binding site" evidence="1">
    <location>
        <position position="59"/>
    </location>
    <ligand>
        <name>(R)-pantoate</name>
        <dbReference type="ChEBI" id="CHEBI:15980"/>
    </ligand>
</feature>
<feature type="binding site" evidence="1">
    <location>
        <position position="59"/>
    </location>
    <ligand>
        <name>beta-alanine</name>
        <dbReference type="ChEBI" id="CHEBI:57966"/>
    </ligand>
</feature>
<feature type="binding site" evidence="1">
    <location>
        <begin position="145"/>
        <end position="148"/>
    </location>
    <ligand>
        <name>ATP</name>
        <dbReference type="ChEBI" id="CHEBI:30616"/>
    </ligand>
</feature>
<feature type="binding site" evidence="1">
    <location>
        <position position="151"/>
    </location>
    <ligand>
        <name>(R)-pantoate</name>
        <dbReference type="ChEBI" id="CHEBI:15980"/>
    </ligand>
</feature>
<feature type="binding site" evidence="1">
    <location>
        <position position="174"/>
    </location>
    <ligand>
        <name>ATP</name>
        <dbReference type="ChEBI" id="CHEBI:30616"/>
    </ligand>
</feature>
<feature type="binding site" evidence="1">
    <location>
        <begin position="182"/>
        <end position="185"/>
    </location>
    <ligand>
        <name>ATP</name>
        <dbReference type="ChEBI" id="CHEBI:30616"/>
    </ligand>
</feature>
<proteinExistence type="inferred from homology"/>
<organism>
    <name type="scientific">Bdellovibrio bacteriovorus (strain ATCC 15356 / DSM 50701 / NCIMB 9529 / HD100)</name>
    <dbReference type="NCBI Taxonomy" id="264462"/>
    <lineage>
        <taxon>Bacteria</taxon>
        <taxon>Pseudomonadati</taxon>
        <taxon>Bdellovibrionota</taxon>
        <taxon>Bdellovibrionia</taxon>
        <taxon>Bdellovibrionales</taxon>
        <taxon>Pseudobdellovibrionaceae</taxon>
        <taxon>Bdellovibrio</taxon>
    </lineage>
</organism>
<name>PANC_BDEBA</name>
<sequence>MTQVLRSPSEFQAWRRKQSGTVGFVPTMGALHTGHEELIKQARKNNDLVVLSIFVNPTQFNDPKDLEKYPQTWDQDLAMAERNNVDAIFFPRYPDMYPDNYRYKVSENEYSTLLDGAHRPGHFDGVLSVVMKLFNVVRPTKAYFGEKDFQQLTLIQGMVESFFMDLEIVPVPTVREEDGLAKSSRNLRLTPEERKKAPAIFKAITNSKTAAEAAASLSAQGFIVDYVTDVGNRRFVAAKLGEVRLIDNVQI</sequence>
<protein>
    <recommendedName>
        <fullName evidence="1">Pantothenate synthetase</fullName>
        <shortName evidence="1">PS</shortName>
        <ecNumber evidence="1">6.3.2.1</ecNumber>
    </recommendedName>
    <alternativeName>
        <fullName evidence="1">Pantoate--beta-alanine ligase</fullName>
    </alternativeName>
    <alternativeName>
        <fullName evidence="1">Pantoate-activating enzyme</fullName>
    </alternativeName>
</protein>
<evidence type="ECO:0000255" key="1">
    <source>
        <dbReference type="HAMAP-Rule" id="MF_00158"/>
    </source>
</evidence>
<accession>Q6MHI2</accession>
<comment type="function">
    <text evidence="1">Catalyzes the condensation of pantoate with beta-alanine in an ATP-dependent reaction via a pantoyl-adenylate intermediate.</text>
</comment>
<comment type="catalytic activity">
    <reaction evidence="1">
        <text>(R)-pantoate + beta-alanine + ATP = (R)-pantothenate + AMP + diphosphate + H(+)</text>
        <dbReference type="Rhea" id="RHEA:10912"/>
        <dbReference type="ChEBI" id="CHEBI:15378"/>
        <dbReference type="ChEBI" id="CHEBI:15980"/>
        <dbReference type="ChEBI" id="CHEBI:29032"/>
        <dbReference type="ChEBI" id="CHEBI:30616"/>
        <dbReference type="ChEBI" id="CHEBI:33019"/>
        <dbReference type="ChEBI" id="CHEBI:57966"/>
        <dbReference type="ChEBI" id="CHEBI:456215"/>
        <dbReference type="EC" id="6.3.2.1"/>
    </reaction>
</comment>
<comment type="pathway">
    <text evidence="1">Cofactor biosynthesis; (R)-pantothenate biosynthesis; (R)-pantothenate from (R)-pantoate and beta-alanine: step 1/1.</text>
</comment>
<comment type="subunit">
    <text evidence="1">Homodimer.</text>
</comment>
<comment type="subcellular location">
    <subcellularLocation>
        <location evidence="1">Cytoplasm</location>
    </subcellularLocation>
</comment>
<comment type="miscellaneous">
    <text evidence="1">The reaction proceeds by a bi uni uni bi ping pong mechanism.</text>
</comment>
<comment type="similarity">
    <text evidence="1">Belongs to the pantothenate synthetase family.</text>
</comment>